<keyword id="KW-0028">Amino-acid biosynthesis</keyword>
<keyword id="KW-0067">ATP-binding</keyword>
<keyword id="KW-0963">Cytoplasm</keyword>
<keyword id="KW-0418">Kinase</keyword>
<keyword id="KW-0547">Nucleotide-binding</keyword>
<keyword id="KW-0641">Proline biosynthesis</keyword>
<keyword id="KW-0808">Transferase</keyword>
<organism>
    <name type="scientific">Nitrosomonas eutropha (strain DSM 101675 / C91 / Nm57)</name>
    <dbReference type="NCBI Taxonomy" id="335283"/>
    <lineage>
        <taxon>Bacteria</taxon>
        <taxon>Pseudomonadati</taxon>
        <taxon>Pseudomonadota</taxon>
        <taxon>Betaproteobacteria</taxon>
        <taxon>Nitrosomonadales</taxon>
        <taxon>Nitrosomonadaceae</taxon>
        <taxon>Nitrosomonas</taxon>
    </lineage>
</organism>
<evidence type="ECO:0000255" key="1">
    <source>
        <dbReference type="HAMAP-Rule" id="MF_00456"/>
    </source>
</evidence>
<comment type="function">
    <text evidence="1">Catalyzes the transfer of a phosphate group to glutamate to form L-glutamate 5-phosphate.</text>
</comment>
<comment type="catalytic activity">
    <reaction evidence="1">
        <text>L-glutamate + ATP = L-glutamyl 5-phosphate + ADP</text>
        <dbReference type="Rhea" id="RHEA:14877"/>
        <dbReference type="ChEBI" id="CHEBI:29985"/>
        <dbReference type="ChEBI" id="CHEBI:30616"/>
        <dbReference type="ChEBI" id="CHEBI:58274"/>
        <dbReference type="ChEBI" id="CHEBI:456216"/>
        <dbReference type="EC" id="2.7.2.11"/>
    </reaction>
</comment>
<comment type="pathway">
    <text evidence="1">Amino-acid biosynthesis; L-proline biosynthesis; L-glutamate 5-semialdehyde from L-glutamate: step 1/2.</text>
</comment>
<comment type="subcellular location">
    <subcellularLocation>
        <location evidence="1">Cytoplasm</location>
    </subcellularLocation>
</comment>
<comment type="similarity">
    <text evidence="1">Belongs to the glutamate 5-kinase family.</text>
</comment>
<feature type="chain" id="PRO_1000081081" description="Glutamate 5-kinase">
    <location>
        <begin position="1"/>
        <end position="373"/>
    </location>
</feature>
<feature type="domain" description="PUA" evidence="1">
    <location>
        <begin position="281"/>
        <end position="359"/>
    </location>
</feature>
<feature type="binding site" evidence="1">
    <location>
        <position position="15"/>
    </location>
    <ligand>
        <name>ATP</name>
        <dbReference type="ChEBI" id="CHEBI:30616"/>
    </ligand>
</feature>
<feature type="binding site" evidence="1">
    <location>
        <position position="55"/>
    </location>
    <ligand>
        <name>substrate</name>
    </ligand>
</feature>
<feature type="binding site" evidence="1">
    <location>
        <position position="142"/>
    </location>
    <ligand>
        <name>substrate</name>
    </ligand>
</feature>
<feature type="binding site" evidence="1">
    <location>
        <position position="154"/>
    </location>
    <ligand>
        <name>substrate</name>
    </ligand>
</feature>
<feature type="binding site" evidence="1">
    <location>
        <begin position="174"/>
        <end position="175"/>
    </location>
    <ligand>
        <name>ATP</name>
        <dbReference type="ChEBI" id="CHEBI:30616"/>
    </ligand>
</feature>
<protein>
    <recommendedName>
        <fullName evidence="1">Glutamate 5-kinase</fullName>
        <ecNumber evidence="1">2.7.2.11</ecNumber>
    </recommendedName>
    <alternativeName>
        <fullName evidence="1">Gamma-glutamyl kinase</fullName>
        <shortName evidence="1">GK</shortName>
    </alternativeName>
</protein>
<sequence length="373" mass="40016">MTRSILQSARRIIVKVGSSLVTNEGSGLDRQVLGGWAGQISRLKKMGKEVVLVSSGAVAEGMQRLGWKTRPAALYELQAAAAVGQMDLAQAYADCFSEYKLLTAQILLTHDDLSSRKRYLNARSTILTLLNLDIVPIINENDTVVSDEIRFGDNDNLAALVANLIEAEVLVILTDQEGLFTGDPRKHADATLISEISVSDPHIETMAGGTSSGIGRGGMQSKVMAARRAARSGAHTVIASGRVENVLVRLANGEAIGTSLLADMPVKVARKLWLADHLQVRGSVVLDDGASRALLSGGKSLLPIGVVEVRGNFERGEAISCLNTSGREIARGLANYSARESHKIMRRPSSQIEAVLGYVGEYELVHRDNLVIL</sequence>
<name>PROB_NITEC</name>
<reference key="1">
    <citation type="journal article" date="2007" name="Environ. Microbiol.">
        <title>Whole-genome analysis of the ammonia-oxidizing bacterium, Nitrosomonas eutropha C91: implications for niche adaptation.</title>
        <authorList>
            <person name="Stein L.Y."/>
            <person name="Arp D.J."/>
            <person name="Berube P.M."/>
            <person name="Chain P.S."/>
            <person name="Hauser L."/>
            <person name="Jetten M.S."/>
            <person name="Klotz M.G."/>
            <person name="Larimer F.W."/>
            <person name="Norton J.M."/>
            <person name="Op den Camp H.J.M."/>
            <person name="Shin M."/>
            <person name="Wei X."/>
        </authorList>
    </citation>
    <scope>NUCLEOTIDE SEQUENCE [LARGE SCALE GENOMIC DNA]</scope>
    <source>
        <strain>DSM 101675 / C91 / Nm57</strain>
    </source>
</reference>
<accession>Q0AHG4</accession>
<proteinExistence type="inferred from homology"/>
<dbReference type="EC" id="2.7.2.11" evidence="1"/>
<dbReference type="EMBL" id="CP000450">
    <property type="protein sequence ID" value="ABI59218.1"/>
    <property type="molecule type" value="Genomic_DNA"/>
</dbReference>
<dbReference type="RefSeq" id="WP_011634042.1">
    <property type="nucleotide sequence ID" value="NC_008344.1"/>
</dbReference>
<dbReference type="SMR" id="Q0AHG4"/>
<dbReference type="STRING" id="335283.Neut_0958"/>
<dbReference type="KEGG" id="net:Neut_0958"/>
<dbReference type="eggNOG" id="COG0263">
    <property type="taxonomic scope" value="Bacteria"/>
</dbReference>
<dbReference type="HOGENOM" id="CLU_025400_2_0_4"/>
<dbReference type="OrthoDB" id="9804434at2"/>
<dbReference type="UniPathway" id="UPA00098">
    <property type="reaction ID" value="UER00359"/>
</dbReference>
<dbReference type="Proteomes" id="UP000001966">
    <property type="component" value="Chromosome"/>
</dbReference>
<dbReference type="GO" id="GO:0005829">
    <property type="term" value="C:cytosol"/>
    <property type="evidence" value="ECO:0007669"/>
    <property type="project" value="TreeGrafter"/>
</dbReference>
<dbReference type="GO" id="GO:0005524">
    <property type="term" value="F:ATP binding"/>
    <property type="evidence" value="ECO:0007669"/>
    <property type="project" value="UniProtKB-KW"/>
</dbReference>
<dbReference type="GO" id="GO:0004349">
    <property type="term" value="F:glutamate 5-kinase activity"/>
    <property type="evidence" value="ECO:0007669"/>
    <property type="project" value="UniProtKB-UniRule"/>
</dbReference>
<dbReference type="GO" id="GO:0003723">
    <property type="term" value="F:RNA binding"/>
    <property type="evidence" value="ECO:0007669"/>
    <property type="project" value="InterPro"/>
</dbReference>
<dbReference type="GO" id="GO:0055129">
    <property type="term" value="P:L-proline biosynthetic process"/>
    <property type="evidence" value="ECO:0007669"/>
    <property type="project" value="UniProtKB-UniRule"/>
</dbReference>
<dbReference type="CDD" id="cd04242">
    <property type="entry name" value="AAK_G5K_ProB"/>
    <property type="match status" value="1"/>
</dbReference>
<dbReference type="CDD" id="cd21157">
    <property type="entry name" value="PUA_G5K"/>
    <property type="match status" value="1"/>
</dbReference>
<dbReference type="FunFam" id="2.30.130.10:FF:000007">
    <property type="entry name" value="Glutamate 5-kinase"/>
    <property type="match status" value="1"/>
</dbReference>
<dbReference type="FunFam" id="3.40.1160.10:FF:000018">
    <property type="entry name" value="Glutamate 5-kinase"/>
    <property type="match status" value="1"/>
</dbReference>
<dbReference type="Gene3D" id="3.40.1160.10">
    <property type="entry name" value="Acetylglutamate kinase-like"/>
    <property type="match status" value="1"/>
</dbReference>
<dbReference type="Gene3D" id="2.30.130.10">
    <property type="entry name" value="PUA domain"/>
    <property type="match status" value="1"/>
</dbReference>
<dbReference type="HAMAP" id="MF_00456">
    <property type="entry name" value="ProB"/>
    <property type="match status" value="1"/>
</dbReference>
<dbReference type="InterPro" id="IPR036393">
    <property type="entry name" value="AceGlu_kinase-like_sf"/>
</dbReference>
<dbReference type="InterPro" id="IPR001048">
    <property type="entry name" value="Asp/Glu/Uridylate_kinase"/>
</dbReference>
<dbReference type="InterPro" id="IPR041739">
    <property type="entry name" value="G5K_ProB"/>
</dbReference>
<dbReference type="InterPro" id="IPR001057">
    <property type="entry name" value="Glu/AcGlu_kinase"/>
</dbReference>
<dbReference type="InterPro" id="IPR011529">
    <property type="entry name" value="Glu_5kinase"/>
</dbReference>
<dbReference type="InterPro" id="IPR005715">
    <property type="entry name" value="Glu_5kinase/COase_Synthase"/>
</dbReference>
<dbReference type="InterPro" id="IPR019797">
    <property type="entry name" value="Glutamate_5-kinase_CS"/>
</dbReference>
<dbReference type="InterPro" id="IPR002478">
    <property type="entry name" value="PUA"/>
</dbReference>
<dbReference type="InterPro" id="IPR015947">
    <property type="entry name" value="PUA-like_sf"/>
</dbReference>
<dbReference type="InterPro" id="IPR036974">
    <property type="entry name" value="PUA_sf"/>
</dbReference>
<dbReference type="NCBIfam" id="TIGR01027">
    <property type="entry name" value="proB"/>
    <property type="match status" value="1"/>
</dbReference>
<dbReference type="PANTHER" id="PTHR43654">
    <property type="entry name" value="GLUTAMATE 5-KINASE"/>
    <property type="match status" value="1"/>
</dbReference>
<dbReference type="PANTHER" id="PTHR43654:SF1">
    <property type="entry name" value="ISOPENTENYL PHOSPHATE KINASE"/>
    <property type="match status" value="1"/>
</dbReference>
<dbReference type="Pfam" id="PF00696">
    <property type="entry name" value="AA_kinase"/>
    <property type="match status" value="1"/>
</dbReference>
<dbReference type="Pfam" id="PF01472">
    <property type="entry name" value="PUA"/>
    <property type="match status" value="1"/>
</dbReference>
<dbReference type="PIRSF" id="PIRSF000729">
    <property type="entry name" value="GK"/>
    <property type="match status" value="1"/>
</dbReference>
<dbReference type="PRINTS" id="PR00474">
    <property type="entry name" value="GLU5KINASE"/>
</dbReference>
<dbReference type="SMART" id="SM00359">
    <property type="entry name" value="PUA"/>
    <property type="match status" value="1"/>
</dbReference>
<dbReference type="SUPFAM" id="SSF53633">
    <property type="entry name" value="Carbamate kinase-like"/>
    <property type="match status" value="1"/>
</dbReference>
<dbReference type="SUPFAM" id="SSF88697">
    <property type="entry name" value="PUA domain-like"/>
    <property type="match status" value="1"/>
</dbReference>
<dbReference type="PROSITE" id="PS00902">
    <property type="entry name" value="GLUTAMATE_5_KINASE"/>
    <property type="match status" value="1"/>
</dbReference>
<dbReference type="PROSITE" id="PS50890">
    <property type="entry name" value="PUA"/>
    <property type="match status" value="1"/>
</dbReference>
<gene>
    <name evidence="1" type="primary">proB</name>
    <name type="ordered locus">Neut_0958</name>
</gene>